<comment type="subcellular location">
    <subcellularLocation>
        <location evidence="1">Mitochondrion</location>
    </subcellularLocation>
</comment>
<comment type="similarity">
    <text evidence="3">Belongs to the AIM24 family.</text>
</comment>
<accession>Q6C749</accession>
<dbReference type="EMBL" id="CR382131">
    <property type="protein sequence ID" value="CAG79092.1"/>
    <property type="molecule type" value="Genomic_DNA"/>
</dbReference>
<dbReference type="RefSeq" id="XP_503513.1">
    <property type="nucleotide sequence ID" value="XM_503513.1"/>
</dbReference>
<dbReference type="FunCoup" id="Q6C749">
    <property type="interactions" value="13"/>
</dbReference>
<dbReference type="STRING" id="284591.Q6C749"/>
<dbReference type="EnsemblFungi" id="CAG79092">
    <property type="protein sequence ID" value="CAG79092"/>
    <property type="gene ID" value="YALI0_E03784g"/>
</dbReference>
<dbReference type="KEGG" id="yli:2912165"/>
<dbReference type="VEuPathDB" id="FungiDB:YALI0_E03784g"/>
<dbReference type="HOGENOM" id="CLU_046558_1_0_1"/>
<dbReference type="InParanoid" id="Q6C749"/>
<dbReference type="OMA" id="QGPRTIL"/>
<dbReference type="OrthoDB" id="94362at4891"/>
<dbReference type="Proteomes" id="UP000001300">
    <property type="component" value="Chromosome E"/>
</dbReference>
<dbReference type="GO" id="GO:0005743">
    <property type="term" value="C:mitochondrial inner membrane"/>
    <property type="evidence" value="ECO:0000318"/>
    <property type="project" value="GO_Central"/>
</dbReference>
<dbReference type="GO" id="GO:0007007">
    <property type="term" value="P:inner mitochondrial membrane organization"/>
    <property type="evidence" value="ECO:0000318"/>
    <property type="project" value="GO_Central"/>
</dbReference>
<dbReference type="Gene3D" id="3.60.160.10">
    <property type="entry name" value="Mitochondrial biogenesis AIM24"/>
    <property type="match status" value="1"/>
</dbReference>
<dbReference type="InterPro" id="IPR002838">
    <property type="entry name" value="AIM24"/>
</dbReference>
<dbReference type="InterPro" id="IPR036983">
    <property type="entry name" value="AIM24_sf"/>
</dbReference>
<dbReference type="InterPro" id="IPR016031">
    <property type="entry name" value="Trp_RNA-bd_attenuator-like_dom"/>
</dbReference>
<dbReference type="PANTHER" id="PTHR36959">
    <property type="entry name" value="ALTERED INHERITANCE OF MITOCHONDRIA PROTEIN 24, MITOCHONDRIAL"/>
    <property type="match status" value="1"/>
</dbReference>
<dbReference type="PANTHER" id="PTHR36959:SF2">
    <property type="entry name" value="ALTERED INHERITANCE OF MITOCHONDRIA PROTEIN 24, MITOCHONDRIAL"/>
    <property type="match status" value="1"/>
</dbReference>
<dbReference type="Pfam" id="PF01987">
    <property type="entry name" value="AIM24"/>
    <property type="match status" value="1"/>
</dbReference>
<dbReference type="SUPFAM" id="SSF51219">
    <property type="entry name" value="TRAP-like"/>
    <property type="match status" value="1"/>
</dbReference>
<keyword id="KW-0496">Mitochondrion</keyword>
<keyword id="KW-1185">Reference proteome</keyword>
<keyword id="KW-0809">Transit peptide</keyword>
<feature type="transit peptide" description="Mitochondrion" evidence="2">
    <location>
        <begin position="1"/>
        <end position="101"/>
    </location>
</feature>
<feature type="chain" id="PRO_0000399596" description="Altered inheritance of mitochondria protein 24, mitochondrial">
    <location>
        <begin position="102"/>
        <end position="315"/>
    </location>
</feature>
<organism>
    <name type="scientific">Yarrowia lipolytica (strain CLIB 122 / E 150)</name>
    <name type="common">Yeast</name>
    <name type="synonym">Candida lipolytica</name>
    <dbReference type="NCBI Taxonomy" id="284591"/>
    <lineage>
        <taxon>Eukaryota</taxon>
        <taxon>Fungi</taxon>
        <taxon>Dikarya</taxon>
        <taxon>Ascomycota</taxon>
        <taxon>Saccharomycotina</taxon>
        <taxon>Dipodascomycetes</taxon>
        <taxon>Dipodascales</taxon>
        <taxon>Dipodascales incertae sedis</taxon>
        <taxon>Yarrowia</taxon>
    </lineage>
</organism>
<gene>
    <name type="primary">AIM24</name>
    <name type="ordered locus">YALI0E03784g</name>
</gene>
<reference key="1">
    <citation type="journal article" date="2004" name="Nature">
        <title>Genome evolution in yeasts.</title>
        <authorList>
            <person name="Dujon B."/>
            <person name="Sherman D."/>
            <person name="Fischer G."/>
            <person name="Durrens P."/>
            <person name="Casaregola S."/>
            <person name="Lafontaine I."/>
            <person name="de Montigny J."/>
            <person name="Marck C."/>
            <person name="Neuveglise C."/>
            <person name="Talla E."/>
            <person name="Goffard N."/>
            <person name="Frangeul L."/>
            <person name="Aigle M."/>
            <person name="Anthouard V."/>
            <person name="Babour A."/>
            <person name="Barbe V."/>
            <person name="Barnay S."/>
            <person name="Blanchin S."/>
            <person name="Beckerich J.-M."/>
            <person name="Beyne E."/>
            <person name="Bleykasten C."/>
            <person name="Boisrame A."/>
            <person name="Boyer J."/>
            <person name="Cattolico L."/>
            <person name="Confanioleri F."/>
            <person name="de Daruvar A."/>
            <person name="Despons L."/>
            <person name="Fabre E."/>
            <person name="Fairhead C."/>
            <person name="Ferry-Dumazet H."/>
            <person name="Groppi A."/>
            <person name="Hantraye F."/>
            <person name="Hennequin C."/>
            <person name="Jauniaux N."/>
            <person name="Joyet P."/>
            <person name="Kachouri R."/>
            <person name="Kerrest A."/>
            <person name="Koszul R."/>
            <person name="Lemaire M."/>
            <person name="Lesur I."/>
            <person name="Ma L."/>
            <person name="Muller H."/>
            <person name="Nicaud J.-M."/>
            <person name="Nikolski M."/>
            <person name="Oztas S."/>
            <person name="Ozier-Kalogeropoulos O."/>
            <person name="Pellenz S."/>
            <person name="Potier S."/>
            <person name="Richard G.-F."/>
            <person name="Straub M.-L."/>
            <person name="Suleau A."/>
            <person name="Swennen D."/>
            <person name="Tekaia F."/>
            <person name="Wesolowski-Louvel M."/>
            <person name="Westhof E."/>
            <person name="Wirth B."/>
            <person name="Zeniou-Meyer M."/>
            <person name="Zivanovic Y."/>
            <person name="Bolotin-Fukuhara M."/>
            <person name="Thierry A."/>
            <person name="Bouchier C."/>
            <person name="Caudron B."/>
            <person name="Scarpelli C."/>
            <person name="Gaillardin C."/>
            <person name="Weissenbach J."/>
            <person name="Wincker P."/>
            <person name="Souciet J.-L."/>
        </authorList>
    </citation>
    <scope>NUCLEOTIDE SEQUENCE [LARGE SCALE GENOMIC DNA]</scope>
    <source>
        <strain>CLIB 122 / E 150</strain>
    </source>
</reference>
<proteinExistence type="inferred from homology"/>
<evidence type="ECO:0000250" key="1"/>
<evidence type="ECO:0000255" key="2"/>
<evidence type="ECO:0000305" key="3"/>
<sequence length="315" mass="34256">MRLQLRSFSTSLRRANNVSQQLKDLPSVSGGGPFPLLPQFQPIGTPPSLVSVSLPASSTLFARRGSIVSINGQLDTITSRLSSLSAFARTVQGMPFLYNRISATAPATLLVSTNTSYQSSLAIVSLDGRTDWTVAQRDALFAWAGAALHVQPNTSLFGSARGGTTRWGNTYLTGRGDVALVGRGQIFKIDLSEDEDILVHPANLLAYTTSQGSANPHGQFVKLNHSAPLLQLPKLPFIERLLANNSLLKSYLDSDFHRAVQNTNKSIRKTWAKWFGTGNQLLQIQGPRTILIQSQRTDLREIVSRNDLAKVGSSD</sequence>
<name>AIM24_YARLI</name>
<protein>
    <recommendedName>
        <fullName>Altered inheritance of mitochondria protein 24, mitochondrial</fullName>
    </recommendedName>
</protein>